<gene>
    <name type="primary">MT-CYB</name>
    <name type="synonym">COB</name>
    <name type="synonym">CYTB</name>
    <name type="synonym">MTCYB</name>
</gene>
<feature type="chain" id="PRO_0000061685" description="Cytochrome b">
    <location>
        <begin position="1"/>
        <end position="381"/>
    </location>
</feature>
<feature type="transmembrane region" description="Helical" evidence="2">
    <location>
        <begin position="33"/>
        <end position="53"/>
    </location>
</feature>
<feature type="transmembrane region" description="Helical" evidence="2">
    <location>
        <begin position="77"/>
        <end position="98"/>
    </location>
</feature>
<feature type="transmembrane region" description="Helical" evidence="2">
    <location>
        <begin position="113"/>
        <end position="133"/>
    </location>
</feature>
<feature type="transmembrane region" description="Helical" evidence="2">
    <location>
        <begin position="178"/>
        <end position="198"/>
    </location>
</feature>
<feature type="transmembrane region" description="Helical" evidence="2">
    <location>
        <begin position="226"/>
        <end position="246"/>
    </location>
</feature>
<feature type="transmembrane region" description="Helical" evidence="2">
    <location>
        <begin position="288"/>
        <end position="308"/>
    </location>
</feature>
<feature type="transmembrane region" description="Helical" evidence="2">
    <location>
        <begin position="320"/>
        <end position="340"/>
    </location>
</feature>
<feature type="transmembrane region" description="Helical" evidence="2">
    <location>
        <begin position="347"/>
        <end position="367"/>
    </location>
</feature>
<feature type="binding site" description="axial binding residue" evidence="2">
    <location>
        <position position="83"/>
    </location>
    <ligand>
        <name>heme b</name>
        <dbReference type="ChEBI" id="CHEBI:60344"/>
        <label>b562</label>
    </ligand>
    <ligandPart>
        <name>Fe</name>
        <dbReference type="ChEBI" id="CHEBI:18248"/>
    </ligandPart>
</feature>
<feature type="binding site" description="axial binding residue" evidence="2">
    <location>
        <position position="97"/>
    </location>
    <ligand>
        <name>heme b</name>
        <dbReference type="ChEBI" id="CHEBI:60344"/>
        <label>b566</label>
    </ligand>
    <ligandPart>
        <name>Fe</name>
        <dbReference type="ChEBI" id="CHEBI:18248"/>
    </ligandPart>
</feature>
<feature type="binding site" description="axial binding residue" evidence="2">
    <location>
        <position position="182"/>
    </location>
    <ligand>
        <name>heme b</name>
        <dbReference type="ChEBI" id="CHEBI:60344"/>
        <label>b562</label>
    </ligand>
    <ligandPart>
        <name>Fe</name>
        <dbReference type="ChEBI" id="CHEBI:18248"/>
    </ligandPart>
</feature>
<feature type="binding site" description="axial binding residue" evidence="2">
    <location>
        <position position="196"/>
    </location>
    <ligand>
        <name>heme b</name>
        <dbReference type="ChEBI" id="CHEBI:60344"/>
        <label>b566</label>
    </ligand>
    <ligandPart>
        <name>Fe</name>
        <dbReference type="ChEBI" id="CHEBI:18248"/>
    </ligandPart>
</feature>
<feature type="binding site" evidence="2">
    <location>
        <position position="201"/>
    </location>
    <ligand>
        <name>a ubiquinone</name>
        <dbReference type="ChEBI" id="CHEBI:16389"/>
    </ligand>
</feature>
<feature type="sequence variant" description="In strain: Isolate CD11.">
    <original>I</original>
    <variation>T</variation>
    <location>
        <position position="10"/>
    </location>
</feature>
<feature type="sequence variant" description="In strain: Isolate CD11.">
    <original>T</original>
    <variation>M</variation>
    <location>
        <position position="17"/>
    </location>
</feature>
<feature type="sequence variant" description="In strain: Isolate CD11.">
    <original>A</original>
    <variation>T</variation>
    <location>
        <position position="158"/>
    </location>
</feature>
<feature type="sequence variant" description="In strain: Isolate CD11.">
    <original>A</original>
    <variation>V</variation>
    <location>
        <position position="229"/>
    </location>
</feature>
<feature type="sequence variant" description="In strain: Isolate CD11.">
    <original>I</original>
    <variation>T</variation>
    <location>
        <position position="238"/>
    </location>
</feature>
<feature type="sequence variant" description="In strain: Isolate CD11.">
    <original>T</original>
    <variation>S</variation>
    <location>
        <position position="246"/>
    </location>
</feature>
<feature type="sequence variant" description="In strain: Isolate CD11.">
    <original>V</original>
    <variation>A</variation>
    <location>
        <position position="353"/>
    </location>
</feature>
<sequence>MSNLRKTHPIMKIINHTFIDLPAPSNISAWWNFGSLLGICLIMQILTGLFLAMHYTADTTTAFSSVAHICRDVNYGWLIRNLHANGASMFFMCLFLHIGRGIYYGSYLYKETWNIGVILLLTVMATAFVGYVLPWGQMSFWGATVITNLLSAIPYIGATLVEWIWGGFSVDKATLTRFFAFHFILPFIITALVLVHLLFLHETGSNNPSGINPDSDKIPFHPYYTIKDALGLMFMLFILLLLTLFTPDMLSDPDNFSPANPLNTPPHIKPEWYFLFAYAILRSIPNKLGGVLALLASILILLAMPLLHTSNQRSMMFRPISQTLFWILTANLLILTWIGGQPVEEPYIIIGQVASISYFLLIIVLMPMAGLFENFMLKPKW</sequence>
<name>CYB_TRICS</name>
<evidence type="ECO:0000250" key="1"/>
<evidence type="ECO:0000250" key="2">
    <source>
        <dbReference type="UniProtKB" id="P00157"/>
    </source>
</evidence>
<evidence type="ECO:0000255" key="3">
    <source>
        <dbReference type="PROSITE-ProRule" id="PRU00967"/>
    </source>
</evidence>
<evidence type="ECO:0000255" key="4">
    <source>
        <dbReference type="PROSITE-ProRule" id="PRU00968"/>
    </source>
</evidence>
<reference key="1">
    <citation type="submission" date="1999-05" db="EMBL/GenBank/DDBJ databases">
        <title>Molecular and phylogenetic analysis of two morphological forms of the mountain brushtail possum (Trichosurus caninus).</title>
        <authorList>
            <person name="Dubach J.M."/>
            <person name="Lindenmayer D.B."/>
            <person name="Viggers K.L."/>
        </authorList>
    </citation>
    <scope>NUCLEOTIDE SEQUENCE [GENOMIC DNA]</scope>
    <source>
        <strain>Isolate BB33</strain>
        <strain>Isolate C6</strain>
        <strain>Isolate CD11</strain>
    </source>
</reference>
<accession>Q8SEJ1</accession>
<accession>Q8SJT0</accession>
<keyword id="KW-0249">Electron transport</keyword>
<keyword id="KW-0349">Heme</keyword>
<keyword id="KW-0408">Iron</keyword>
<keyword id="KW-0472">Membrane</keyword>
<keyword id="KW-0479">Metal-binding</keyword>
<keyword id="KW-0496">Mitochondrion</keyword>
<keyword id="KW-0999">Mitochondrion inner membrane</keyword>
<keyword id="KW-0679">Respiratory chain</keyword>
<keyword id="KW-0812">Transmembrane</keyword>
<keyword id="KW-1133">Transmembrane helix</keyword>
<keyword id="KW-0813">Transport</keyword>
<keyword id="KW-0830">Ubiquinone</keyword>
<protein>
    <recommendedName>
        <fullName>Cytochrome b</fullName>
    </recommendedName>
    <alternativeName>
        <fullName>Complex III subunit 3</fullName>
    </alternativeName>
    <alternativeName>
        <fullName>Complex III subunit III</fullName>
    </alternativeName>
    <alternativeName>
        <fullName>Cytochrome b-c1 complex subunit 3</fullName>
    </alternativeName>
    <alternativeName>
        <fullName>Ubiquinol-cytochrome-c reductase complex cytochrome b subunit</fullName>
    </alternativeName>
</protein>
<proteinExistence type="inferred from homology"/>
<dbReference type="EMBL" id="AF152858">
    <property type="protein sequence ID" value="AAL83421.1"/>
    <property type="molecule type" value="Genomic_DNA"/>
</dbReference>
<dbReference type="EMBL" id="AF152859">
    <property type="protein sequence ID" value="AAL83422.1"/>
    <property type="molecule type" value="Genomic_DNA"/>
</dbReference>
<dbReference type="EMBL" id="AF152861">
    <property type="protein sequence ID" value="AAL83424.1"/>
    <property type="molecule type" value="Genomic_DNA"/>
</dbReference>
<dbReference type="SMR" id="Q8SEJ1"/>
<dbReference type="GO" id="GO:0005743">
    <property type="term" value="C:mitochondrial inner membrane"/>
    <property type="evidence" value="ECO:0007669"/>
    <property type="project" value="UniProtKB-SubCell"/>
</dbReference>
<dbReference type="GO" id="GO:0045275">
    <property type="term" value="C:respiratory chain complex III"/>
    <property type="evidence" value="ECO:0007669"/>
    <property type="project" value="InterPro"/>
</dbReference>
<dbReference type="GO" id="GO:0046872">
    <property type="term" value="F:metal ion binding"/>
    <property type="evidence" value="ECO:0007669"/>
    <property type="project" value="UniProtKB-KW"/>
</dbReference>
<dbReference type="GO" id="GO:0008121">
    <property type="term" value="F:ubiquinol-cytochrome-c reductase activity"/>
    <property type="evidence" value="ECO:0007669"/>
    <property type="project" value="InterPro"/>
</dbReference>
<dbReference type="GO" id="GO:0006122">
    <property type="term" value="P:mitochondrial electron transport, ubiquinol to cytochrome c"/>
    <property type="evidence" value="ECO:0007669"/>
    <property type="project" value="TreeGrafter"/>
</dbReference>
<dbReference type="CDD" id="cd00290">
    <property type="entry name" value="cytochrome_b_C"/>
    <property type="match status" value="1"/>
</dbReference>
<dbReference type="CDD" id="cd00284">
    <property type="entry name" value="Cytochrome_b_N"/>
    <property type="match status" value="1"/>
</dbReference>
<dbReference type="FunFam" id="1.20.810.10:FF:000002">
    <property type="entry name" value="Cytochrome b"/>
    <property type="match status" value="1"/>
</dbReference>
<dbReference type="Gene3D" id="1.20.810.10">
    <property type="entry name" value="Cytochrome Bc1 Complex, Chain C"/>
    <property type="match status" value="1"/>
</dbReference>
<dbReference type="InterPro" id="IPR005798">
    <property type="entry name" value="Cyt_b/b6_C"/>
</dbReference>
<dbReference type="InterPro" id="IPR036150">
    <property type="entry name" value="Cyt_b/b6_C_sf"/>
</dbReference>
<dbReference type="InterPro" id="IPR005797">
    <property type="entry name" value="Cyt_b/b6_N"/>
</dbReference>
<dbReference type="InterPro" id="IPR027387">
    <property type="entry name" value="Cytb/b6-like_sf"/>
</dbReference>
<dbReference type="InterPro" id="IPR030689">
    <property type="entry name" value="Cytochrome_b"/>
</dbReference>
<dbReference type="InterPro" id="IPR048260">
    <property type="entry name" value="Cytochrome_b_C_euk/bac"/>
</dbReference>
<dbReference type="InterPro" id="IPR048259">
    <property type="entry name" value="Cytochrome_b_N_euk/bac"/>
</dbReference>
<dbReference type="InterPro" id="IPR016174">
    <property type="entry name" value="Di-haem_cyt_TM"/>
</dbReference>
<dbReference type="PANTHER" id="PTHR19271">
    <property type="entry name" value="CYTOCHROME B"/>
    <property type="match status" value="1"/>
</dbReference>
<dbReference type="PANTHER" id="PTHR19271:SF16">
    <property type="entry name" value="CYTOCHROME B"/>
    <property type="match status" value="1"/>
</dbReference>
<dbReference type="Pfam" id="PF00032">
    <property type="entry name" value="Cytochrom_B_C"/>
    <property type="match status" value="1"/>
</dbReference>
<dbReference type="Pfam" id="PF00033">
    <property type="entry name" value="Cytochrome_B"/>
    <property type="match status" value="1"/>
</dbReference>
<dbReference type="PIRSF" id="PIRSF038885">
    <property type="entry name" value="COB"/>
    <property type="match status" value="1"/>
</dbReference>
<dbReference type="SUPFAM" id="SSF81648">
    <property type="entry name" value="a domain/subunit of cytochrome bc1 complex (Ubiquinol-cytochrome c reductase)"/>
    <property type="match status" value="1"/>
</dbReference>
<dbReference type="SUPFAM" id="SSF81342">
    <property type="entry name" value="Transmembrane di-heme cytochromes"/>
    <property type="match status" value="1"/>
</dbReference>
<dbReference type="PROSITE" id="PS51003">
    <property type="entry name" value="CYTB_CTER"/>
    <property type="match status" value="1"/>
</dbReference>
<dbReference type="PROSITE" id="PS51002">
    <property type="entry name" value="CYTB_NTER"/>
    <property type="match status" value="1"/>
</dbReference>
<geneLocation type="mitochondrion"/>
<organism>
    <name type="scientific">Trichosurus caninus</name>
    <name type="common">Mountain brushtail possum</name>
    <dbReference type="NCBI Taxonomy" id="128432"/>
    <lineage>
        <taxon>Eukaryota</taxon>
        <taxon>Metazoa</taxon>
        <taxon>Chordata</taxon>
        <taxon>Craniata</taxon>
        <taxon>Vertebrata</taxon>
        <taxon>Euteleostomi</taxon>
        <taxon>Mammalia</taxon>
        <taxon>Metatheria</taxon>
        <taxon>Diprotodontia</taxon>
        <taxon>Phalangeridae</taxon>
        <taxon>Trichosurus</taxon>
    </lineage>
</organism>
<comment type="function">
    <text evidence="2">Component of the ubiquinol-cytochrome c reductase complex (complex III or cytochrome b-c1 complex) that is part of the mitochondrial respiratory chain. The b-c1 complex mediates electron transfer from ubiquinol to cytochrome c. Contributes to the generation of a proton gradient across the mitochondrial membrane that is then used for ATP synthesis.</text>
</comment>
<comment type="cofactor">
    <cofactor evidence="2">
        <name>heme b</name>
        <dbReference type="ChEBI" id="CHEBI:60344"/>
    </cofactor>
    <text evidence="2">Binds 2 heme b groups non-covalently.</text>
</comment>
<comment type="subunit">
    <text evidence="2">The cytochrome bc1 complex contains 11 subunits: 3 respiratory subunits (MT-CYB, CYC1 and UQCRFS1), 2 core proteins (UQCRC1 and UQCRC2) and 6 low-molecular weight proteins (UQCRH/QCR6, UQCRB/QCR7, UQCRQ/QCR8, UQCR10/QCR9, UQCR11/QCR10 and a cleavage product of UQCRFS1). This cytochrome bc1 complex then forms a dimer.</text>
</comment>
<comment type="subcellular location">
    <subcellularLocation>
        <location evidence="2">Mitochondrion inner membrane</location>
        <topology evidence="2">Multi-pass membrane protein</topology>
    </subcellularLocation>
</comment>
<comment type="miscellaneous">
    <text evidence="1">Heme 1 (or BL or b562) is low-potential and absorbs at about 562 nm, and heme 2 (or BH or b566) is high-potential and absorbs at about 566 nm.</text>
</comment>
<comment type="similarity">
    <text evidence="3 4">Belongs to the cytochrome b family.</text>
</comment>
<comment type="caution">
    <text evidence="2">The full-length protein contains only eight transmembrane helices, not nine as predicted by bioinformatics tools.</text>
</comment>